<protein>
    <recommendedName>
        <fullName>Peptostreptococcal albumin-binding protein</fullName>
    </recommendedName>
</protein>
<dbReference type="EMBL" id="X77864">
    <property type="protein sequence ID" value="CAA54857.1"/>
    <property type="molecule type" value="Genomic_DNA"/>
</dbReference>
<dbReference type="PIR" id="A53586">
    <property type="entry name" value="A53586"/>
</dbReference>
<dbReference type="PDB" id="1GAB">
    <property type="method" value="NMR"/>
    <property type="chains" value="A=213-265"/>
</dbReference>
<dbReference type="PDB" id="1PRB">
    <property type="method" value="NMR"/>
    <property type="chains" value="A=213-265"/>
</dbReference>
<dbReference type="PDB" id="1TF0">
    <property type="method" value="X-ray"/>
    <property type="resolution" value="2.70 A"/>
    <property type="chains" value="B=213-265"/>
</dbReference>
<dbReference type="PDB" id="2J5Y">
    <property type="method" value="X-ray"/>
    <property type="resolution" value="1.40 A"/>
    <property type="chains" value="A/B=213-265"/>
</dbReference>
<dbReference type="PDB" id="2VDB">
    <property type="method" value="X-ray"/>
    <property type="resolution" value="2.52 A"/>
    <property type="chains" value="B=213-265"/>
</dbReference>
<dbReference type="PDB" id="9BB1">
    <property type="method" value="NMR"/>
    <property type="chains" value="A=219-265"/>
</dbReference>
<dbReference type="PDB" id="9BB2">
    <property type="method" value="NMR"/>
    <property type="chains" value="A=219-265"/>
</dbReference>
<dbReference type="PDB" id="9BB3">
    <property type="method" value="NMR"/>
    <property type="chains" value="A=219-265"/>
</dbReference>
<dbReference type="PDB" id="9BB4">
    <property type="method" value="NMR"/>
    <property type="chains" value="A=219-265"/>
</dbReference>
<dbReference type="PDB" id="9BB5">
    <property type="method" value="NMR"/>
    <property type="chains" value="A=219-265"/>
</dbReference>
<dbReference type="PDB" id="9BB6">
    <property type="method" value="NMR"/>
    <property type="chains" value="A=219-265"/>
</dbReference>
<dbReference type="PDB" id="9BB7">
    <property type="method" value="NMR"/>
    <property type="chains" value="A=219-265"/>
</dbReference>
<dbReference type="PDBsum" id="1GAB"/>
<dbReference type="PDBsum" id="1PRB"/>
<dbReference type="PDBsum" id="1TF0"/>
<dbReference type="PDBsum" id="2J5Y"/>
<dbReference type="PDBsum" id="2VDB"/>
<dbReference type="PDBsum" id="9BB1"/>
<dbReference type="PDBsum" id="9BB2"/>
<dbReference type="PDBsum" id="9BB3"/>
<dbReference type="PDBsum" id="9BB4"/>
<dbReference type="PDBsum" id="9BB5"/>
<dbReference type="PDBsum" id="9BB6"/>
<dbReference type="PDBsum" id="9BB7"/>
<dbReference type="SMR" id="Q51911"/>
<dbReference type="DrugBank" id="DB03600">
    <property type="generic name" value="Capric acid"/>
</dbReference>
<dbReference type="DrugBank" id="DB00788">
    <property type="generic name" value="Naproxen"/>
</dbReference>
<dbReference type="EvolutionaryTrace" id="Q51911"/>
<dbReference type="GO" id="GO:0005576">
    <property type="term" value="C:extracellular region"/>
    <property type="evidence" value="ECO:0007669"/>
    <property type="project" value="UniProtKB-KW"/>
</dbReference>
<dbReference type="Gene3D" id="1.10.8.40">
    <property type="entry name" value="Albumin-binding domain"/>
    <property type="match status" value="2"/>
</dbReference>
<dbReference type="InterPro" id="IPR040912">
    <property type="entry name" value="DUF5633"/>
</dbReference>
<dbReference type="InterPro" id="IPR035152">
    <property type="entry name" value="GA-like"/>
</dbReference>
<dbReference type="InterPro" id="IPR009063">
    <property type="entry name" value="Ig/albumin-bd_sf"/>
</dbReference>
<dbReference type="InterPro" id="IPR019931">
    <property type="entry name" value="LPXTG_anchor"/>
</dbReference>
<dbReference type="Pfam" id="PF18656">
    <property type="entry name" value="DUF5633"/>
    <property type="match status" value="1"/>
</dbReference>
<dbReference type="Pfam" id="PF17573">
    <property type="entry name" value="GA-like"/>
    <property type="match status" value="2"/>
</dbReference>
<dbReference type="Pfam" id="PF00746">
    <property type="entry name" value="Gram_pos_anchor"/>
    <property type="match status" value="1"/>
</dbReference>
<dbReference type="SUPFAM" id="SSF46997">
    <property type="entry name" value="Bacterial immunoglobulin/albumin-binding domains"/>
    <property type="match status" value="2"/>
</dbReference>
<dbReference type="PROSITE" id="PS50847">
    <property type="entry name" value="GRAM_POS_ANCHORING"/>
    <property type="match status" value="1"/>
</dbReference>
<reference key="1">
    <citation type="journal article" date="1994" name="J. Biol. Chem.">
        <title>Protein PAB, a mosaic albumin-binding bacterial protein representing the first contemporary example of module shuffling.</title>
        <authorList>
            <person name="de Chateau M."/>
            <person name="Bjoerck L."/>
        </authorList>
    </citation>
    <scope>NUCLEOTIDE SEQUENCE [GENOMIC DNA]</scope>
    <source>
        <strain>ALB8</strain>
    </source>
</reference>
<reference key="2">
    <citation type="journal article" date="1997" name="J. Mol. Biol.">
        <title>Solution structure of the albumin-binding GA module: a versatile bacterial protein domain.</title>
        <authorList>
            <person name="Johansson M.U."/>
            <person name="de Chateau M."/>
            <person name="Wikstroem M."/>
            <person name="Forsen S."/>
            <person name="Drakenberg T."/>
            <person name="Bjoerck L."/>
        </authorList>
    </citation>
    <scope>STRUCTURE BY NMR OF 213-265</scope>
    <scope>SEQUENCE REVISION TO 244</scope>
    <source>
        <strain>ALB8</strain>
    </source>
</reference>
<accession>Q51911</accession>
<evidence type="ECO:0000255" key="1">
    <source>
        <dbReference type="PROSITE-ProRule" id="PRU00477"/>
    </source>
</evidence>
<evidence type="ECO:0000256" key="2">
    <source>
        <dbReference type="SAM" id="MobiDB-lite"/>
    </source>
</evidence>
<evidence type="ECO:0007829" key="3">
    <source>
        <dbReference type="PDB" id="1PRB"/>
    </source>
</evidence>
<evidence type="ECO:0007829" key="4">
    <source>
        <dbReference type="PDB" id="2J5Y"/>
    </source>
</evidence>
<evidence type="ECO:0007829" key="5">
    <source>
        <dbReference type="PDB" id="9BB3"/>
    </source>
</evidence>
<organism>
    <name type="scientific">Finegoldia magna</name>
    <name type="common">Peptostreptococcus magnus</name>
    <dbReference type="NCBI Taxonomy" id="1260"/>
    <lineage>
        <taxon>Bacteria</taxon>
        <taxon>Bacillati</taxon>
        <taxon>Bacillota</taxon>
        <taxon>Tissierellia</taxon>
        <taxon>Tissierellales</taxon>
        <taxon>Peptoniphilaceae</taxon>
        <taxon>Finegoldia</taxon>
    </lineage>
</organism>
<keyword id="KW-0002">3D-structure</keyword>
<keyword id="KW-0134">Cell wall</keyword>
<keyword id="KW-0572">Peptidoglycan-anchor</keyword>
<keyword id="KW-0964">Secreted</keyword>
<keyword id="KW-0732">Signal</keyword>
<sequence>MKLNKKLLMAALAGAIVVGGGVNTFAADEPGAIKVDKAPEAPSQELKLTKEEAEKALKKEKPIAKERLRRLGITSEFILNQIDKATSREGLESLVQTIKQSYLKDHPIKEEKTEETPKYNNLFDKHELGGLGKDKGPGRFDENGWENNEHGYETRENAEKAAVKALGDKEINKSYTISQGVDGRYYYVLSREEAETPKKPEEKKPEDKRPKMTIDQWLLKNAKEDAIAELKKAGITSDFYFNAINKAKTVEEVNALKNEILKAHAGKEVNPSTPEVTPSVPQNHYHENDYANIGAGEGTKEDGKKENSKEGIKRKTAREEKPGKEEKPAKEDKKENKKKENTDSPNKKKKEKAALPEAGRRKAEILTLAAASLSSVAGAFISLKKRK</sequence>
<name>PAB_FINMA</name>
<feature type="signal peptide">
    <location>
        <begin position="1"/>
        <end position="26"/>
    </location>
</feature>
<feature type="chain" id="PRO_0000005643" description="Peptostreptococcal albumin-binding protein">
    <location>
        <begin position="27"/>
        <end position="358"/>
    </location>
</feature>
<feature type="propeptide" id="PRO_0000005644" description="Removed by sortase" evidence="1">
    <location>
        <begin position="359"/>
        <end position="387"/>
    </location>
</feature>
<feature type="region of interest" description="Disordered" evidence="2">
    <location>
        <begin position="122"/>
        <end position="155"/>
    </location>
</feature>
<feature type="region of interest" description="GA module">
    <location>
        <begin position="213"/>
        <end position="265"/>
    </location>
</feature>
<feature type="region of interest" description="Disordered" evidence="2">
    <location>
        <begin position="266"/>
        <end position="360"/>
    </location>
</feature>
<feature type="short sequence motif" description="LPXTG sorting signal" evidence="1">
    <location>
        <begin position="355"/>
        <end position="359"/>
    </location>
</feature>
<feature type="compositionally biased region" description="Polar residues" evidence="2">
    <location>
        <begin position="270"/>
        <end position="282"/>
    </location>
</feature>
<feature type="compositionally biased region" description="Basic and acidic residues" evidence="2">
    <location>
        <begin position="298"/>
        <end position="360"/>
    </location>
</feature>
<feature type="modified residue" description="Pentaglycyl murein peptidoglycan amidated alanine" evidence="1">
    <location>
        <position position="358"/>
    </location>
</feature>
<feature type="helix" evidence="4">
    <location>
        <begin position="214"/>
        <end position="232"/>
    </location>
</feature>
<feature type="strand" evidence="5">
    <location>
        <begin position="235"/>
        <end position="237"/>
    </location>
</feature>
<feature type="helix" evidence="4">
    <location>
        <begin position="238"/>
        <end position="246"/>
    </location>
</feature>
<feature type="strand" evidence="3">
    <location>
        <begin position="247"/>
        <end position="249"/>
    </location>
</feature>
<feature type="helix" evidence="4">
    <location>
        <begin position="250"/>
        <end position="264"/>
    </location>
</feature>
<proteinExistence type="evidence at protein level"/>
<gene>
    <name type="primary">pab</name>
</gene>
<comment type="function">
    <text>Binds serum albumin.</text>
</comment>
<comment type="subcellular location">
    <subcellularLocation>
        <location evidence="1">Secreted</location>
        <location evidence="1">Cell wall</location>
        <topology evidence="1">Peptidoglycan-anchor</topology>
    </subcellularLocation>
</comment>